<proteinExistence type="evidence at protein level"/>
<evidence type="ECO:0000255" key="1">
    <source>
        <dbReference type="PROSITE-ProRule" id="PRU01346"/>
    </source>
</evidence>
<evidence type="ECO:0000256" key="2">
    <source>
        <dbReference type="SAM" id="MobiDB-lite"/>
    </source>
</evidence>
<evidence type="ECO:0000269" key="3">
    <source>
    </source>
</evidence>
<evidence type="ECO:0000269" key="4">
    <source>
    </source>
</evidence>
<evidence type="ECO:0000269" key="5">
    <source>
    </source>
</evidence>
<evidence type="ECO:0000269" key="6">
    <source>
    </source>
</evidence>
<evidence type="ECO:0000269" key="7">
    <source>
    </source>
</evidence>
<evidence type="ECO:0000269" key="8">
    <source>
    </source>
</evidence>
<evidence type="ECO:0000269" key="9">
    <source>
    </source>
</evidence>
<evidence type="ECO:0000303" key="10">
    <source>
    </source>
</evidence>
<evidence type="ECO:0000303" key="11">
    <source>
    </source>
</evidence>
<evidence type="ECO:0000305" key="12"/>
<evidence type="ECO:0000312" key="13">
    <source>
        <dbReference type="EMBL" id="AAL39639.1"/>
    </source>
</evidence>
<evidence type="ECO:0000312" key="14">
    <source>
        <dbReference type="EMBL" id="AAM12250.1"/>
    </source>
</evidence>
<evidence type="ECO:0000312" key="15">
    <source>
        <dbReference type="EMBL" id="AAN13663.1"/>
    </source>
</evidence>
<evidence type="ECO:0000312" key="16">
    <source>
        <dbReference type="EMBL" id="AAN71095.1"/>
    </source>
</evidence>
<evidence type="ECO:0000312" key="17">
    <source>
        <dbReference type="FlyBase" id="FBgn0041188"/>
    </source>
</evidence>
<dbReference type="EMBL" id="AE014297">
    <property type="protein sequence ID" value="AAN13663.1"/>
    <property type="molecule type" value="Genomic_DNA"/>
</dbReference>
<dbReference type="EMBL" id="AE014297">
    <property type="protein sequence ID" value="AAN13664.2"/>
    <property type="molecule type" value="Genomic_DNA"/>
</dbReference>
<dbReference type="EMBL" id="AE014297">
    <property type="protein sequence ID" value="AAF55196.2"/>
    <property type="molecule type" value="Genomic_DNA"/>
</dbReference>
<dbReference type="EMBL" id="AY058253">
    <property type="protein sequence ID" value="AAL13482.1"/>
    <property type="molecule type" value="mRNA"/>
</dbReference>
<dbReference type="EMBL" id="AY069494">
    <property type="protein sequence ID" value="AAL39639.1"/>
    <property type="status" value="ALT_INIT"/>
    <property type="molecule type" value="mRNA"/>
</dbReference>
<dbReference type="EMBL" id="AY095516">
    <property type="protein sequence ID" value="AAM12250.1"/>
    <property type="molecule type" value="mRNA"/>
</dbReference>
<dbReference type="EMBL" id="BT001272">
    <property type="protein sequence ID" value="AAN71028.1"/>
    <property type="status" value="ALT_SEQ"/>
    <property type="molecule type" value="mRNA"/>
</dbReference>
<dbReference type="EMBL" id="BT001340">
    <property type="protein sequence ID" value="AAN71095.1"/>
    <property type="status" value="ALT_SEQ"/>
    <property type="molecule type" value="mRNA"/>
</dbReference>
<dbReference type="RefSeq" id="NP_001287339.1">
    <molecule id="Q8SWR8-3"/>
    <property type="nucleotide sequence ID" value="NM_001300410.1"/>
</dbReference>
<dbReference type="RefSeq" id="NP_650466.2">
    <property type="nucleotide sequence ID" value="NM_142209.3"/>
</dbReference>
<dbReference type="RefSeq" id="NP_732033.1">
    <molecule id="Q8SWR8-1"/>
    <property type="nucleotide sequence ID" value="NM_169657.3"/>
</dbReference>
<dbReference type="RefSeq" id="NP_732034.2">
    <molecule id="Q8SWR8-3"/>
    <property type="nucleotide sequence ID" value="NM_169658.3"/>
</dbReference>
<dbReference type="SMR" id="Q8SWR8"/>
<dbReference type="BioGRID" id="66945">
    <property type="interactions" value="37"/>
</dbReference>
<dbReference type="DIP" id="DIP-61417N"/>
<dbReference type="ELM" id="Q8SWR8"/>
<dbReference type="FunCoup" id="Q8SWR8">
    <property type="interactions" value="1594"/>
</dbReference>
<dbReference type="IntAct" id="Q8SWR8">
    <property type="interactions" value="17"/>
</dbReference>
<dbReference type="MINT" id="Q8SWR8"/>
<dbReference type="STRING" id="7227.FBpp0082555"/>
<dbReference type="GlyGen" id="Q8SWR8">
    <property type="glycosylation" value="4 sites, 1 O-linked glycan (1 site)"/>
</dbReference>
<dbReference type="iPTMnet" id="Q8SWR8"/>
<dbReference type="PaxDb" id="7227-FBpp0082555"/>
<dbReference type="DNASU" id="41883"/>
<dbReference type="EnsemblMetazoa" id="FBtr0083099">
    <molecule id="Q8SWR8-1"/>
    <property type="protein sequence ID" value="FBpp0082555"/>
    <property type="gene ID" value="FBgn0041188"/>
</dbReference>
<dbReference type="EnsemblMetazoa" id="FBtr0083100">
    <molecule id="Q8SWR8-3"/>
    <property type="protein sequence ID" value="FBpp0082556"/>
    <property type="gene ID" value="FBgn0041188"/>
</dbReference>
<dbReference type="EnsemblMetazoa" id="FBtr0344377">
    <molecule id="Q8SWR8-3"/>
    <property type="protein sequence ID" value="FBpp0310750"/>
    <property type="gene ID" value="FBgn0041188"/>
</dbReference>
<dbReference type="GeneID" id="41883"/>
<dbReference type="KEGG" id="dme:Dmel_CG5166"/>
<dbReference type="UCSC" id="CG5166-RA">
    <molecule id="Q8SWR8-1"/>
    <property type="organism name" value="d. melanogaster"/>
</dbReference>
<dbReference type="AGR" id="FB:FBgn0041188"/>
<dbReference type="CTD" id="41883"/>
<dbReference type="FlyBase" id="FBgn0041188">
    <property type="gene designation" value="Atx2"/>
</dbReference>
<dbReference type="VEuPathDB" id="VectorBase:FBgn0041188"/>
<dbReference type="eggNOG" id="KOG2375">
    <property type="taxonomic scope" value="Eukaryota"/>
</dbReference>
<dbReference type="GeneTree" id="ENSGT00940000157795"/>
<dbReference type="HOGENOM" id="CLU_282884_0_0_1"/>
<dbReference type="InParanoid" id="Q8SWR8"/>
<dbReference type="OMA" id="MRVYQDQ"/>
<dbReference type="OrthoDB" id="2275718at2759"/>
<dbReference type="PhylomeDB" id="Q8SWR8"/>
<dbReference type="SignaLink" id="Q8SWR8"/>
<dbReference type="BioGRID-ORCS" id="41883">
    <property type="hits" value="0 hits in 3 CRISPR screens"/>
</dbReference>
<dbReference type="CD-CODE" id="558B70E9">
    <property type="entry name" value="Synthetic Condensate 000263"/>
</dbReference>
<dbReference type="CD-CODE" id="B0349C78">
    <property type="entry name" value="Neuronal RNP granule"/>
</dbReference>
<dbReference type="CD-CODE" id="E61E225E">
    <property type="entry name" value="Stress granule"/>
</dbReference>
<dbReference type="ChiTaRS" id="Atx2">
    <property type="organism name" value="fly"/>
</dbReference>
<dbReference type="GenomeRNAi" id="41883"/>
<dbReference type="PRO" id="PR:Q8SWR8"/>
<dbReference type="Proteomes" id="UP000000803">
    <property type="component" value="Chromosome 3R"/>
</dbReference>
<dbReference type="Bgee" id="FBgn0041188">
    <property type="expression patterns" value="Expressed in adult oenocyte (Drosophila) in dorsal vessel heart and 280 other cell types or tissues"/>
</dbReference>
<dbReference type="ExpressionAtlas" id="Q8SWR8">
    <property type="expression patterns" value="baseline and differential"/>
</dbReference>
<dbReference type="GO" id="GO:0005737">
    <property type="term" value="C:cytoplasm"/>
    <property type="evidence" value="ECO:0000314"/>
    <property type="project" value="UniProtKB"/>
</dbReference>
<dbReference type="GO" id="GO:0010494">
    <property type="term" value="C:cytoplasmic stress granule"/>
    <property type="evidence" value="ECO:0000314"/>
    <property type="project" value="FlyBase"/>
</dbReference>
<dbReference type="GO" id="GO:0035770">
    <property type="term" value="C:ribonucleoprotein granule"/>
    <property type="evidence" value="ECO:0000314"/>
    <property type="project" value="FlyBase"/>
</dbReference>
<dbReference type="GO" id="GO:0003729">
    <property type="term" value="F:mRNA binding"/>
    <property type="evidence" value="ECO:0000318"/>
    <property type="project" value="GO_Central"/>
</dbReference>
<dbReference type="GO" id="GO:0003723">
    <property type="term" value="F:RNA binding"/>
    <property type="evidence" value="ECO:0000314"/>
    <property type="project" value="FlyBase"/>
</dbReference>
<dbReference type="GO" id="GO:0022416">
    <property type="term" value="P:chaeta development"/>
    <property type="evidence" value="ECO:0000315"/>
    <property type="project" value="UniProtKB"/>
</dbReference>
<dbReference type="GO" id="GO:0097167">
    <property type="term" value="P:circadian regulation of translation"/>
    <property type="evidence" value="ECO:0000315"/>
    <property type="project" value="FlyBase"/>
</dbReference>
<dbReference type="GO" id="GO:0048749">
    <property type="term" value="P:compound eye development"/>
    <property type="evidence" value="ECO:0000315"/>
    <property type="project" value="UniProtKB"/>
</dbReference>
<dbReference type="GO" id="GO:0042051">
    <property type="term" value="P:compound eye photoreceptor development"/>
    <property type="evidence" value="ECO:0000315"/>
    <property type="project" value="FlyBase"/>
</dbReference>
<dbReference type="GO" id="GO:0046959">
    <property type="term" value="P:habituation"/>
    <property type="evidence" value="ECO:0000315"/>
    <property type="project" value="FlyBase"/>
</dbReference>
<dbReference type="GO" id="GO:0045475">
    <property type="term" value="P:locomotor rhythm"/>
    <property type="evidence" value="ECO:0000315"/>
    <property type="project" value="FlyBase"/>
</dbReference>
<dbReference type="GO" id="GO:0007616">
    <property type="term" value="P:long-term memory"/>
    <property type="evidence" value="ECO:0000315"/>
    <property type="project" value="FlyBase"/>
</dbReference>
<dbReference type="GO" id="GO:0035195">
    <property type="term" value="P:miRNA-mediated post-transcriptional gene silencing"/>
    <property type="evidence" value="ECO:0000315"/>
    <property type="project" value="FlyBase"/>
</dbReference>
<dbReference type="GO" id="GO:0009994">
    <property type="term" value="P:oocyte differentiation"/>
    <property type="evidence" value="ECO:0000315"/>
    <property type="project" value="UniProtKB"/>
</dbReference>
<dbReference type="GO" id="GO:0062029">
    <property type="term" value="P:positive regulation of stress granule assembly"/>
    <property type="evidence" value="ECO:0000315"/>
    <property type="project" value="FlyBase"/>
</dbReference>
<dbReference type="GO" id="GO:0030833">
    <property type="term" value="P:regulation of actin filament polymerization"/>
    <property type="evidence" value="ECO:0000315"/>
    <property type="project" value="UniProtKB"/>
</dbReference>
<dbReference type="GO" id="GO:0090328">
    <property type="term" value="P:regulation of olfactory learning"/>
    <property type="evidence" value="ECO:0000315"/>
    <property type="project" value="FlyBase"/>
</dbReference>
<dbReference type="GO" id="GO:0051823">
    <property type="term" value="P:regulation of synapse structural plasticity"/>
    <property type="evidence" value="ECO:0000315"/>
    <property type="project" value="FlyBase"/>
</dbReference>
<dbReference type="GO" id="GO:0034063">
    <property type="term" value="P:stress granule assembly"/>
    <property type="evidence" value="ECO:0000318"/>
    <property type="project" value="GO_Central"/>
</dbReference>
<dbReference type="InterPro" id="IPR045117">
    <property type="entry name" value="ATXN2-like"/>
</dbReference>
<dbReference type="InterPro" id="IPR009604">
    <property type="entry name" value="LsmAD_domain"/>
</dbReference>
<dbReference type="InterPro" id="IPR047575">
    <property type="entry name" value="Sm"/>
</dbReference>
<dbReference type="InterPro" id="IPR025852">
    <property type="entry name" value="SM_dom_ATX"/>
</dbReference>
<dbReference type="PANTHER" id="PTHR12854">
    <property type="entry name" value="ATAXIN 2-RELATED"/>
    <property type="match status" value="1"/>
</dbReference>
<dbReference type="PANTHER" id="PTHR12854:SF7">
    <property type="entry name" value="ATAXIN-2 HOMOLOG"/>
    <property type="match status" value="1"/>
</dbReference>
<dbReference type="Pfam" id="PF06741">
    <property type="entry name" value="LsmAD"/>
    <property type="match status" value="1"/>
</dbReference>
<dbReference type="Pfam" id="PF14438">
    <property type="entry name" value="SM-ATX"/>
    <property type="match status" value="1"/>
</dbReference>
<dbReference type="SMART" id="SM01272">
    <property type="entry name" value="LsmAD"/>
    <property type="match status" value="1"/>
</dbReference>
<dbReference type="PROSITE" id="PS52002">
    <property type="entry name" value="SM"/>
    <property type="match status" value="1"/>
</dbReference>
<reference evidence="15" key="1">
    <citation type="journal article" date="2000" name="Science">
        <title>The genome sequence of Drosophila melanogaster.</title>
        <authorList>
            <person name="Adams M.D."/>
            <person name="Celniker S.E."/>
            <person name="Holt R.A."/>
            <person name="Evans C.A."/>
            <person name="Gocayne J.D."/>
            <person name="Amanatides P.G."/>
            <person name="Scherer S.E."/>
            <person name="Li P.W."/>
            <person name="Hoskins R.A."/>
            <person name="Galle R.F."/>
            <person name="George R.A."/>
            <person name="Lewis S.E."/>
            <person name="Richards S."/>
            <person name="Ashburner M."/>
            <person name="Henderson S.N."/>
            <person name="Sutton G.G."/>
            <person name="Wortman J.R."/>
            <person name="Yandell M.D."/>
            <person name="Zhang Q."/>
            <person name="Chen L.X."/>
            <person name="Brandon R.C."/>
            <person name="Rogers Y.-H.C."/>
            <person name="Blazej R.G."/>
            <person name="Champe M."/>
            <person name="Pfeiffer B.D."/>
            <person name="Wan K.H."/>
            <person name="Doyle C."/>
            <person name="Baxter E.G."/>
            <person name="Helt G."/>
            <person name="Nelson C.R."/>
            <person name="Miklos G.L.G."/>
            <person name="Abril J.F."/>
            <person name="Agbayani A."/>
            <person name="An H.-J."/>
            <person name="Andrews-Pfannkoch C."/>
            <person name="Baldwin D."/>
            <person name="Ballew R.M."/>
            <person name="Basu A."/>
            <person name="Baxendale J."/>
            <person name="Bayraktaroglu L."/>
            <person name="Beasley E.M."/>
            <person name="Beeson K.Y."/>
            <person name="Benos P.V."/>
            <person name="Berman B.P."/>
            <person name="Bhandari D."/>
            <person name="Bolshakov S."/>
            <person name="Borkova D."/>
            <person name="Botchan M.R."/>
            <person name="Bouck J."/>
            <person name="Brokstein P."/>
            <person name="Brottier P."/>
            <person name="Burtis K.C."/>
            <person name="Busam D.A."/>
            <person name="Butler H."/>
            <person name="Cadieu E."/>
            <person name="Center A."/>
            <person name="Chandra I."/>
            <person name="Cherry J.M."/>
            <person name="Cawley S."/>
            <person name="Dahlke C."/>
            <person name="Davenport L.B."/>
            <person name="Davies P."/>
            <person name="de Pablos B."/>
            <person name="Delcher A."/>
            <person name="Deng Z."/>
            <person name="Mays A.D."/>
            <person name="Dew I."/>
            <person name="Dietz S.M."/>
            <person name="Dodson K."/>
            <person name="Doup L.E."/>
            <person name="Downes M."/>
            <person name="Dugan-Rocha S."/>
            <person name="Dunkov B.C."/>
            <person name="Dunn P."/>
            <person name="Durbin K.J."/>
            <person name="Evangelista C.C."/>
            <person name="Ferraz C."/>
            <person name="Ferriera S."/>
            <person name="Fleischmann W."/>
            <person name="Fosler C."/>
            <person name="Gabrielian A.E."/>
            <person name="Garg N.S."/>
            <person name="Gelbart W.M."/>
            <person name="Glasser K."/>
            <person name="Glodek A."/>
            <person name="Gong F."/>
            <person name="Gorrell J.H."/>
            <person name="Gu Z."/>
            <person name="Guan P."/>
            <person name="Harris M."/>
            <person name="Harris N.L."/>
            <person name="Harvey D.A."/>
            <person name="Heiman T.J."/>
            <person name="Hernandez J.R."/>
            <person name="Houck J."/>
            <person name="Hostin D."/>
            <person name="Houston K.A."/>
            <person name="Howland T.J."/>
            <person name="Wei M.-H."/>
            <person name="Ibegwam C."/>
            <person name="Jalali M."/>
            <person name="Kalush F."/>
            <person name="Karpen G.H."/>
            <person name="Ke Z."/>
            <person name="Kennison J.A."/>
            <person name="Ketchum K.A."/>
            <person name="Kimmel B.E."/>
            <person name="Kodira C.D."/>
            <person name="Kraft C.L."/>
            <person name="Kravitz S."/>
            <person name="Kulp D."/>
            <person name="Lai Z."/>
            <person name="Lasko P."/>
            <person name="Lei Y."/>
            <person name="Levitsky A.A."/>
            <person name="Li J.H."/>
            <person name="Li Z."/>
            <person name="Liang Y."/>
            <person name="Lin X."/>
            <person name="Liu X."/>
            <person name="Mattei B."/>
            <person name="McIntosh T.C."/>
            <person name="McLeod M.P."/>
            <person name="McPherson D."/>
            <person name="Merkulov G."/>
            <person name="Milshina N.V."/>
            <person name="Mobarry C."/>
            <person name="Morris J."/>
            <person name="Moshrefi A."/>
            <person name="Mount S.M."/>
            <person name="Moy M."/>
            <person name="Murphy B."/>
            <person name="Murphy L."/>
            <person name="Muzny D.M."/>
            <person name="Nelson D.L."/>
            <person name="Nelson D.R."/>
            <person name="Nelson K.A."/>
            <person name="Nixon K."/>
            <person name="Nusskern D.R."/>
            <person name="Pacleb J.M."/>
            <person name="Palazzolo M."/>
            <person name="Pittman G.S."/>
            <person name="Pan S."/>
            <person name="Pollard J."/>
            <person name="Puri V."/>
            <person name="Reese M.G."/>
            <person name="Reinert K."/>
            <person name="Remington K."/>
            <person name="Saunders R.D.C."/>
            <person name="Scheeler F."/>
            <person name="Shen H."/>
            <person name="Shue B.C."/>
            <person name="Siden-Kiamos I."/>
            <person name="Simpson M."/>
            <person name="Skupski M.P."/>
            <person name="Smith T.J."/>
            <person name="Spier E."/>
            <person name="Spradling A.C."/>
            <person name="Stapleton M."/>
            <person name="Strong R."/>
            <person name="Sun E."/>
            <person name="Svirskas R."/>
            <person name="Tector C."/>
            <person name="Turner R."/>
            <person name="Venter E."/>
            <person name="Wang A.H."/>
            <person name="Wang X."/>
            <person name="Wang Z.-Y."/>
            <person name="Wassarman D.A."/>
            <person name="Weinstock G.M."/>
            <person name="Weissenbach J."/>
            <person name="Williams S.M."/>
            <person name="Woodage T."/>
            <person name="Worley K.C."/>
            <person name="Wu D."/>
            <person name="Yang S."/>
            <person name="Yao Q.A."/>
            <person name="Ye J."/>
            <person name="Yeh R.-F."/>
            <person name="Zaveri J.S."/>
            <person name="Zhan M."/>
            <person name="Zhang G."/>
            <person name="Zhao Q."/>
            <person name="Zheng L."/>
            <person name="Zheng X.H."/>
            <person name="Zhong F.N."/>
            <person name="Zhong W."/>
            <person name="Zhou X."/>
            <person name="Zhu S.C."/>
            <person name="Zhu X."/>
            <person name="Smith H.O."/>
            <person name="Gibbs R.A."/>
            <person name="Myers E.W."/>
            <person name="Rubin G.M."/>
            <person name="Venter J.C."/>
        </authorList>
    </citation>
    <scope>NUCLEOTIDE SEQUENCE [LARGE SCALE GENOMIC DNA]</scope>
    <source>
        <strain evidence="3">Berkeley</strain>
    </source>
</reference>
<reference evidence="12 15" key="2">
    <citation type="journal article" date="2002" name="Genome Biol.">
        <title>Annotation of the Drosophila melanogaster euchromatic genome: a systematic review.</title>
        <authorList>
            <person name="Misra S."/>
            <person name="Crosby M.A."/>
            <person name="Mungall C.J."/>
            <person name="Matthews B.B."/>
            <person name="Campbell K.S."/>
            <person name="Hradecky P."/>
            <person name="Huang Y."/>
            <person name="Kaminker J.S."/>
            <person name="Millburn G.H."/>
            <person name="Prochnik S.E."/>
            <person name="Smith C.D."/>
            <person name="Tupy J.L."/>
            <person name="Whitfield E.J."/>
            <person name="Bayraktaroglu L."/>
            <person name="Berman B.P."/>
            <person name="Bettencourt B.R."/>
            <person name="Celniker S.E."/>
            <person name="de Grey A.D.N.J."/>
            <person name="Drysdale R.A."/>
            <person name="Harris N.L."/>
            <person name="Richter J."/>
            <person name="Russo S."/>
            <person name="Schroeder A.J."/>
            <person name="Shu S.Q."/>
            <person name="Stapleton M."/>
            <person name="Yamada C."/>
            <person name="Ashburner M."/>
            <person name="Gelbart W.M."/>
            <person name="Rubin G.M."/>
            <person name="Lewis S.E."/>
        </authorList>
    </citation>
    <scope>GENOME REANNOTATION</scope>
    <scope>ALTERNATIVE SPLICING</scope>
    <source>
        <strain>Berkeley</strain>
    </source>
</reference>
<reference evidence="12 14" key="3">
    <citation type="journal article" date="2002" name="Genome Biol.">
        <title>A Drosophila full-length cDNA resource.</title>
        <authorList>
            <person name="Stapleton M."/>
            <person name="Carlson J.W."/>
            <person name="Brokstein P."/>
            <person name="Yu C."/>
            <person name="Champe M."/>
            <person name="George R.A."/>
            <person name="Guarin H."/>
            <person name="Kronmiller B."/>
            <person name="Pacleb J.M."/>
            <person name="Park S."/>
            <person name="Wan K.H."/>
            <person name="Rubin G.M."/>
            <person name="Celniker S.E."/>
        </authorList>
    </citation>
    <scope>NUCLEOTIDE SEQUENCE [LARGE SCALE MRNA] (ISOFORMS A AND B)</scope>
    <scope>RNA EDITING OF POSITIONS 381 AND 398</scope>
    <source>
        <tissue evidence="13">Embryo</tissue>
        <tissue evidence="14">Head</tissue>
        <tissue evidence="16">Testis</tissue>
    </source>
</reference>
<reference evidence="12" key="4">
    <citation type="journal article" date="2002" name="Genetics">
        <title>A Drosophila homolog of the polyglutamine disease gene SCA2 is a dosage-sensitive regulator of actin filament formation.</title>
        <authorList>
            <person name="Satterfield T.F."/>
            <person name="Jackson S.M."/>
            <person name="Pallanck L.J."/>
        </authorList>
    </citation>
    <scope>FUNCTION</scope>
    <scope>SUBCELLULAR LOCATION</scope>
    <scope>DEVELOPMENTAL STAGE</scope>
    <scope>DISRUPTION PHENOTYPE</scope>
</reference>
<reference evidence="12" key="5">
    <citation type="journal article" date="2006" name="RNA">
        <title>RNA editing in Drosophila melanogaster: new targets and functional consequences.</title>
        <authorList>
            <person name="Stapleton M."/>
            <person name="Carlson J.W."/>
            <person name="Celniker S.E."/>
        </authorList>
    </citation>
    <scope>RNA EDITING OF POSITIONS 381 AND 398</scope>
</reference>
<reference evidence="12" key="6">
    <citation type="journal article" date="2007" name="Mol. Biosyst.">
        <title>An integrated chemical, mass spectrometric and computational strategy for (quantitative) phosphoproteomics: application to Drosophila melanogaster Kc167 cells.</title>
        <authorList>
            <person name="Bodenmiller B."/>
            <person name="Mueller L.N."/>
            <person name="Pedrioli P.G.A."/>
            <person name="Pflieger D."/>
            <person name="Juenger M.A."/>
            <person name="Eng J.K."/>
            <person name="Aebersold R."/>
            <person name="Tao W.A."/>
        </authorList>
    </citation>
    <scope>PHOSPHORYLATION [LARGE SCALE ANALYSIS] AT SER-266</scope>
    <scope>IDENTIFICATION BY MASS SPECTROMETRY</scope>
</reference>
<reference key="7">
    <citation type="journal article" date="2008" name="J. Proteome Res.">
        <title>Phosphoproteome analysis of Drosophila melanogaster embryos.</title>
        <authorList>
            <person name="Zhai B."/>
            <person name="Villen J."/>
            <person name="Beausoleil S.A."/>
            <person name="Mintseris J."/>
            <person name="Gygi S.P."/>
        </authorList>
    </citation>
    <scope>PHOSPHORYLATION [LARGE SCALE ANALYSIS] AT SER-208; SER-211 AND SER-221</scope>
    <scope>IDENTIFICATION BY MASS SPECTROMETRY</scope>
    <source>
        <tissue>Embryo</tissue>
    </source>
</reference>
<reference key="8">
    <citation type="journal article" date="2017" name="Mol. Cell">
        <title>LSM12 and ME31B/DDX6 Define Distinct Modes of Posttranscriptional Regulation by ATAXIN-2 Protein Complex in Drosophila Circadian Pacemaker Neurons.</title>
        <authorList>
            <person name="Lee J."/>
            <person name="Yoo E."/>
            <person name="Lee H."/>
            <person name="Park K."/>
            <person name="Hur J.H."/>
            <person name="Lim C."/>
        </authorList>
    </citation>
    <scope>FUNCTION</scope>
    <scope>IDENTIFICATION IN A COMPLEX WITH TYF; PABP AND LSM12A</scope>
    <scope>IDENTIFICATION IN A COMPLEX WITH TYF; PABP AND ME31B</scope>
    <scope>INTERACTION WITH TYF; PABP; ME31B AND LSM12A</scope>
    <scope>DOMAIN</scope>
</reference>
<keyword id="KW-0025">Alternative splicing</keyword>
<keyword id="KW-0963">Cytoplasm</keyword>
<keyword id="KW-0217">Developmental protein</keyword>
<keyword id="KW-0597">Phosphoprotein</keyword>
<keyword id="KW-1185">Reference proteome</keyword>
<keyword id="KW-0691">RNA editing</keyword>
<gene>
    <name evidence="17" type="primary">Atx2</name>
    <name type="ORF">CG5166</name>
</gene>
<feature type="chain" id="PRO_0000311703" description="Ataxin-2 homolog">
    <location>
        <begin position="1"/>
        <end position="1084"/>
    </location>
</feature>
<feature type="domain" description="Sm" evidence="1">
    <location>
        <begin position="60"/>
        <end position="135"/>
    </location>
</feature>
<feature type="region of interest" description="Disordered" evidence="2">
    <location>
        <begin position="1"/>
        <end position="46"/>
    </location>
</feature>
<feature type="region of interest" description="Disordered" evidence="2">
    <location>
        <begin position="260"/>
        <end position="935"/>
    </location>
</feature>
<feature type="region of interest" description="Disordered" evidence="2">
    <location>
        <begin position="1000"/>
        <end position="1037"/>
    </location>
</feature>
<feature type="region of interest" description="Disordered" evidence="2">
    <location>
        <begin position="1057"/>
        <end position="1084"/>
    </location>
</feature>
<feature type="compositionally biased region" description="Basic residues" evidence="2">
    <location>
        <begin position="1"/>
        <end position="10"/>
    </location>
</feature>
<feature type="compositionally biased region" description="Polar residues" evidence="2">
    <location>
        <begin position="22"/>
        <end position="33"/>
    </location>
</feature>
<feature type="compositionally biased region" description="Basic and acidic residues" evidence="2">
    <location>
        <begin position="265"/>
        <end position="300"/>
    </location>
</feature>
<feature type="compositionally biased region" description="Polar residues" evidence="2">
    <location>
        <begin position="312"/>
        <end position="331"/>
    </location>
</feature>
<feature type="compositionally biased region" description="Low complexity" evidence="2">
    <location>
        <begin position="384"/>
        <end position="403"/>
    </location>
</feature>
<feature type="compositionally biased region" description="Low complexity" evidence="2">
    <location>
        <begin position="424"/>
        <end position="445"/>
    </location>
</feature>
<feature type="compositionally biased region" description="Polar residues" evidence="2">
    <location>
        <begin position="452"/>
        <end position="476"/>
    </location>
</feature>
<feature type="compositionally biased region" description="Polar residues" evidence="2">
    <location>
        <begin position="484"/>
        <end position="513"/>
    </location>
</feature>
<feature type="compositionally biased region" description="Low complexity" evidence="2">
    <location>
        <begin position="540"/>
        <end position="584"/>
    </location>
</feature>
<feature type="compositionally biased region" description="Low complexity" evidence="2">
    <location>
        <begin position="613"/>
        <end position="694"/>
    </location>
</feature>
<feature type="compositionally biased region" description="Low complexity" evidence="2">
    <location>
        <begin position="701"/>
        <end position="711"/>
    </location>
</feature>
<feature type="compositionally biased region" description="Low complexity" evidence="2">
    <location>
        <begin position="733"/>
        <end position="743"/>
    </location>
</feature>
<feature type="compositionally biased region" description="Low complexity" evidence="2">
    <location>
        <begin position="754"/>
        <end position="765"/>
    </location>
</feature>
<feature type="compositionally biased region" description="Low complexity" evidence="2">
    <location>
        <begin position="773"/>
        <end position="788"/>
    </location>
</feature>
<feature type="compositionally biased region" description="Low complexity" evidence="2">
    <location>
        <begin position="796"/>
        <end position="812"/>
    </location>
</feature>
<feature type="compositionally biased region" description="Low complexity" evidence="2">
    <location>
        <begin position="822"/>
        <end position="853"/>
    </location>
</feature>
<feature type="compositionally biased region" description="Pro residues" evidence="2">
    <location>
        <begin position="871"/>
        <end position="885"/>
    </location>
</feature>
<feature type="compositionally biased region" description="Polar residues" evidence="2">
    <location>
        <begin position="886"/>
        <end position="896"/>
    </location>
</feature>
<feature type="compositionally biased region" description="Low complexity" evidence="2">
    <location>
        <begin position="1000"/>
        <end position="1017"/>
    </location>
</feature>
<feature type="compositionally biased region" description="Low complexity" evidence="2">
    <location>
        <begin position="1066"/>
        <end position="1084"/>
    </location>
</feature>
<feature type="modified residue" description="Phosphoserine" evidence="8">
    <location>
        <position position="208"/>
    </location>
</feature>
<feature type="modified residue" description="Phosphoserine" evidence="8">
    <location>
        <position position="211"/>
    </location>
</feature>
<feature type="modified residue" description="Phosphoserine" evidence="8">
    <location>
        <position position="221"/>
    </location>
</feature>
<feature type="modified residue" description="Phosphoserine" evidence="7">
    <location>
        <position position="266"/>
    </location>
</feature>
<feature type="splice variant" id="VSP_052610" description="In isoform A and isoform C." evidence="10 11">
    <location>
        <begin position="1"/>
        <end position="61"/>
    </location>
</feature>
<feature type="splice variant" id="VSP_052611" description="In isoform A." evidence="10 11">
    <original>PPMAASQMHVSASA</original>
    <variation>RKSILPIIKHFIFF</variation>
    <location>
        <begin position="936"/>
        <end position="949"/>
    </location>
</feature>
<feature type="splice variant" id="VSP_052612" description="In isoform A." evidence="10 11">
    <location>
        <begin position="950"/>
        <end position="1084"/>
    </location>
</feature>
<feature type="sequence variant" description="In RNA edited version." evidence="6">
    <original>K</original>
    <variation>R</variation>
    <location>
        <position position="381"/>
    </location>
</feature>
<feature type="sequence variant" description="In RNA edited version." evidence="6">
    <original>K</original>
    <variation>R</variation>
    <location>
        <position position="398"/>
    </location>
</feature>
<feature type="sequence conflict" description="In Ref. 3; AAL13482." evidence="12" ref="3">
    <original>T</original>
    <variation>A</variation>
    <location>
        <position position="368"/>
    </location>
</feature>
<accession>Q8SWR8</accession>
<accession>Q8IHA4</accession>
<accession>Q8IHF7</accession>
<accession>Q8INE0</accession>
<accession>Q8T081</accession>
<accession>Q95U80</accession>
<accession>Q9VF64</accession>
<organism>
    <name type="scientific">Drosophila melanogaster</name>
    <name type="common">Fruit fly</name>
    <dbReference type="NCBI Taxonomy" id="7227"/>
    <lineage>
        <taxon>Eukaryota</taxon>
        <taxon>Metazoa</taxon>
        <taxon>Ecdysozoa</taxon>
        <taxon>Arthropoda</taxon>
        <taxon>Hexapoda</taxon>
        <taxon>Insecta</taxon>
        <taxon>Pterygota</taxon>
        <taxon>Neoptera</taxon>
        <taxon>Endopterygota</taxon>
        <taxon>Diptera</taxon>
        <taxon>Brachycera</taxon>
        <taxon>Muscomorpha</taxon>
        <taxon>Ephydroidea</taxon>
        <taxon>Drosophilidae</taxon>
        <taxon>Drosophila</taxon>
        <taxon>Sophophora</taxon>
    </lineage>
</organism>
<protein>
    <recommendedName>
        <fullName>Ataxin-2 homolog</fullName>
        <shortName>Datx2</shortName>
    </recommendedName>
</protein>
<name>ATX2_DROME</name>
<sequence>MNNNSKRKTRPTGGGASGGISRYNSNDNSLRPTNNKAGAGGGNGGAAVRPSAQGVYNNTFFMHSATALVGSVVEVRLRSGNIYEGVFRTFSGNFDIALELPACIKSKNLPEEGKVPKHIIFPADTVVTIVAKDFDSQYATAGAFQTDGAISDKCNGARPDEKELEPWDSGANGDIDIELDSAANGWDPNEMFRKNENTFGVTSTFDDSLASYTVPLDKGDSLEFKEAEAKAEKLAAEIENNPTCRDRLDLENGDEEALFAAVERPSTEQDQRGDRGDRERNDRDREREERDRDRDRDRGNKPRGAGDFQLRETMSSDRYITKQTRSITGPQLSHVGMSSQGSGRDRDTRGDGSMMMQSGGGSGQGGSTQSTAALMLAGGLKGVGPAPSANASADSSSKYSGGSMVKRKTVPQGGKVMRNNVPTGGSNVSVSQGGNGNSVGQNKGGYQPSMGMPSQYSYQGNSQIMHGSSQYRNQSHMGGANKLNGDSNANTNKPLPQRQMRQYQGSQSNSSLNYGGEPQSLGKPVHGSHGGHPGQNSNSPPLQTAGPQQQQQQQQQQQQQQQQQQPPQQQQHQNIQPQGQNTQPARQVRTRDNQMQELRQFGQDFQLAPSNTSPPQQQQQQQQQQQQHQVQQQQQRALQQSASPPQQQQQQQQQQQHVVLHQVPQTHLHQAALSQPHYVPQQQPQQAPLPQQQHVPHHMQQKAQQQQLVETQHQHVQKQHQSQPQVQQPPPQLLQDPSQQPLPIYHTMPPPQTSPVVVTSPVLLEQPPPQPMPVVQQQQTQQLATPKPEVSPAPPSSNTTTPTGIASTPTAGVIASAGSEKTTPAAPTPTSNSATVPTGTAATAGGATGTTPVVKKHVLNPSAKPFTPRGPSTPNPSRPHTPQTPVPMTNIYTTTGGHVPPAANQPIYVMQPQHPFPPQTHPQAGQPPRLRRSNYPPMAASQMHVSASAATGQPLITAGPIPQFIQYGHAPHQQQFQSHTYAPMQMRVYPDQPQQLQFMTQTPQSTTPSPGQPHQQFHPPPQPSPAGGGPQPAFTPPTQAATYQLMCVHPQSLLANHYFPPPTPQHPQQNQQQYQIVMQQHQPQ</sequence>
<comment type="function">
    <text evidence="4 9">RNA binding protein that regulates various processes including circadian behaviors, actin filament formation, eye development and oocyte formation (PubMed:12524342, PubMed:28388438). Forms a complex with tyf and pAbp which functions in adult circadian pacemaker neurons to sustain circadian rhythms likely by switching between activator and repressor modes of post-transcriptional regulation via interaction with Lsm12a or me31B (PubMed:28388438). Forms an activator complex (Atx2-tyf activator complex) via association with Lsm12a and activates the TYF-dependent translation of per to maintain 24 hour periodicity in circadian locomotor behaviors (PubMed:28388438). Forms a repressor complex (Atx2-Not1 repressor complex) via the me31B-dependent association with Not1 to promote Not1-dependent post-transcriptional gene silencing and support high-amplitude circadian rhythms in a per-independent manner (PubMed:28388438). Regulates actin filament formation, though it does not directly assemble with actin filaments (PubMed:12524342). Required for oocyte specification and oocyte positioning in the female germline (PubMed:12524342). Also required for normal eye development and bristle morphology (PubMed:12524342).</text>
</comment>
<comment type="subunit">
    <text evidence="9">Homodimer (PubMed:28388438). In the circadian pacemaker neurons, core component of the Atx2-tyf activator complex composed of at least Atx2, tyf, pAbp, Lsm12a (PubMed:28388438). In the circadian pacemaker neurons, also a core component of the Atx2-Not1 repressor complex composed of at least Atx2, tyf, pAbp, me31B (PubMed:28388438). Interacts (via PAM2 motif) with pAbp (PubMed:28388438). Interacts (via N-terminus) with tyf independently of pAbp (PubMed:28388438). Forms a subcomplex composed of Atx2 and pAbP which can associate with the 5' cap of pre-mRNAs independently of tyf, Lsm12a or me31B (PubMed:28388438). Interacts with Lsm12a and me31B (PubMed:28388438).</text>
</comment>
<comment type="interaction">
    <interactant intactId="EBI-3486190">
        <id>Q8SWR8</id>
    </interactant>
    <interactant intactId="EBI-194676">
        <id>Q9W4M7</id>
        <label>tyf</label>
    </interactant>
    <organismsDiffer>false</organismsDiffer>
    <experiments>4</experiments>
</comment>
<comment type="subcellular location">
    <subcellularLocation>
        <location evidence="4">Cytoplasm</location>
    </subcellularLocation>
</comment>
<comment type="alternative products">
    <event type="alternative splicing"/>
    <isoform>
        <id>Q8SWR8-1</id>
        <name evidence="3">B</name>
        <sequence type="displayed"/>
    </isoform>
    <isoform>
        <id>Q8SWR8-2</id>
        <name evidence="3">A</name>
        <sequence type="described" ref="VSP_052610 VSP_052611 VSP_052612"/>
    </isoform>
    <isoform>
        <id>Q8SWR8-3</id>
        <name evidence="3">C</name>
        <sequence type="described" ref="VSP_052610"/>
    </isoform>
</comment>
<comment type="developmental stage">
    <text evidence="4">Expressed both maternally and zygotically. Zygotic expression is seen in third larval instar, pupae, and adults.</text>
</comment>
<comment type="domain">
    <text evidence="9">The PAM2 motif, and therefore interaction with pAbp, is essential for binding to the 5' cap of pre-mRNAs.</text>
</comment>
<comment type="RNA editing">
    <location>
        <position position="381" evidence="5 6"/>
    </location>
    <location>
        <position position="398" evidence="5 6"/>
    </location>
    <text evidence="6">Partially edited. Target of Adar.</text>
</comment>
<comment type="disruption phenotype">
    <text evidence="4">Second instar larvae lethal.</text>
</comment>
<comment type="similarity">
    <text evidence="12">Belongs to the ataxin-2 family.</text>
</comment>
<comment type="sequence caution" evidence="12">
    <conflict type="erroneous initiation">
        <sequence resource="EMBL-CDS" id="AAL39639"/>
    </conflict>
</comment>
<comment type="sequence caution" evidence="12">
    <conflict type="erroneous initiation">
        <sequence resource="EMBL-CDS" id="AAN71028"/>
    </conflict>
    <text>Extended N-terminus.</text>
</comment>
<comment type="sequence caution" evidence="12">
    <conflict type="miscellaneous discrepancy">
        <sequence resource="EMBL-CDS" id="AAN71028"/>
    </conflict>
    <text>Potential poly-A sequence.</text>
</comment>
<comment type="sequence caution" evidence="12">
    <conflict type="miscellaneous discrepancy">
        <sequence resource="EMBL-CDS" id="AAN71095"/>
    </conflict>
</comment>